<dbReference type="EMBL" id="EU233922">
    <property type="protein sequence ID" value="ABY71741.1"/>
    <property type="molecule type" value="mRNA"/>
</dbReference>
<dbReference type="PDB" id="2N8K">
    <property type="method" value="NMR"/>
    <property type="chains" value="A=24-98"/>
</dbReference>
<dbReference type="PDBsum" id="2N8K"/>
<dbReference type="SMR" id="B1P1J1"/>
<dbReference type="ArachnoServer" id="AS000870">
    <property type="toxin name" value="U33-theraphotoxin-Cg1c"/>
</dbReference>
<dbReference type="GO" id="GO:0005576">
    <property type="term" value="C:extracellular region"/>
    <property type="evidence" value="ECO:0007669"/>
    <property type="project" value="UniProtKB-SubCell"/>
</dbReference>
<dbReference type="GO" id="GO:0090729">
    <property type="term" value="F:toxin activity"/>
    <property type="evidence" value="ECO:0007669"/>
    <property type="project" value="UniProtKB-KW"/>
</dbReference>
<dbReference type="Gene3D" id="2.10.80.10">
    <property type="entry name" value="Lipase, subunit A"/>
    <property type="match status" value="1"/>
</dbReference>
<comment type="subcellular location">
    <subcellularLocation>
        <location evidence="6">Secreted</location>
    </subcellularLocation>
</comment>
<comment type="tissue specificity">
    <text evidence="6">Expressed by the venom gland.</text>
</comment>
<comment type="domain">
    <text evidence="7">Consists of two fundamental structural elements: a disulfide-directed beta-hairpin motif (DDH) and a disulfide-stabilized antiparallel beta-hairpin stack (DABS), which are covalently linked together.</text>
</comment>
<comment type="similarity">
    <text evidence="5">Belongs to the neurotoxin 32 family.</text>
</comment>
<sequence>MKFAVAIAFTLLVCVFAQEEEEPVTCGGKQCKPNSCCVQNSHGKGKDSPRCHPLGKLNNPCEVEPNENGIYSQHCPCGEGLSCTKVGEPNKLRCQEESGKSDKSKESQGSDESEESEESKESSG</sequence>
<keyword id="KW-0002">3D-structure</keyword>
<keyword id="KW-1015">Disulfide bond</keyword>
<keyword id="KW-0964">Secreted</keyword>
<keyword id="KW-0732">Signal</keyword>
<keyword id="KW-0800">Toxin</keyword>
<evidence type="ECO:0000255" key="1"/>
<evidence type="ECO:0000256" key="2">
    <source>
        <dbReference type="SAM" id="MobiDB-lite"/>
    </source>
</evidence>
<evidence type="ECO:0000269" key="3">
    <source>
    </source>
</evidence>
<evidence type="ECO:0000303" key="4">
    <source>
    </source>
</evidence>
<evidence type="ECO:0000305" key="5"/>
<evidence type="ECO:0000305" key="6">
    <source>
    </source>
</evidence>
<evidence type="ECO:0000305" key="7">
    <source>
    </source>
</evidence>
<evidence type="ECO:0007744" key="8">
    <source>
        <dbReference type="PDB" id="2N8K"/>
    </source>
</evidence>
<evidence type="ECO:0007829" key="9">
    <source>
        <dbReference type="PDB" id="2N8K"/>
    </source>
</evidence>
<reference key="1">
    <citation type="journal article" date="2008" name="Cell. Mol. Life Sci.">
        <title>Molecular diversity and evolution of cystine knot toxins of the tarantula Chilobrachys jingzhao.</title>
        <authorList>
            <person name="Chen J."/>
            <person name="Deng M."/>
            <person name="He Q."/>
            <person name="Meng E."/>
            <person name="Jiang L."/>
            <person name="Liao Z."/>
            <person name="Rong M."/>
            <person name="Liang S."/>
        </authorList>
    </citation>
    <scope>NUCLEOTIDE SEQUENCE [LARGE SCALE MRNA]</scope>
    <source>
        <tissue>Venom gland</tissue>
    </source>
</reference>
<reference key="2">
    <citation type="journal article" date="2020" name="Proc. Natl. Acad. Sci. U.S.A.">
        <title>Structural venomics reveals evolution of a complex venom by duplication and diversification of an ancient peptide-encoding gene.</title>
        <authorList>
            <person name="Pineda S.S."/>
            <person name="Chin Y.K."/>
            <person name="Undheim E.A.B."/>
            <person name="Senff S."/>
            <person name="Mobli M."/>
            <person name="Dauly C."/>
            <person name="Escoubas P."/>
            <person name="Nicholson G.M."/>
            <person name="Kaas Q."/>
            <person name="Guo S."/>
            <person name="Herzig V."/>
            <person name="Mattick J.S."/>
            <person name="King G.F."/>
        </authorList>
    </citation>
    <scope>STRUCTURE BY NMR OF 24-98</scope>
    <scope>DISULFIDE BONDS</scope>
    <scope>RECOMBINANT EXPRESSION</scope>
</reference>
<proteinExistence type="evidence at protein level"/>
<protein>
    <recommendedName>
        <fullName evidence="5">U33-theraphotoxin-Cg1c</fullName>
        <shortName evidence="5">U33-TRTX-Cg1c</shortName>
    </recommendedName>
    <alternativeName>
        <fullName evidence="4">Jingzhaotoxin-70</fullName>
        <shortName evidence="4">JZTX-70</shortName>
    </alternativeName>
</protein>
<accession>B1P1J1</accession>
<organism>
    <name type="scientific">Chilobrachys guangxiensis</name>
    <name type="common">Chinese earth tiger tarantula</name>
    <name type="synonym">Chilobrachys jingzhao</name>
    <dbReference type="NCBI Taxonomy" id="278060"/>
    <lineage>
        <taxon>Eukaryota</taxon>
        <taxon>Metazoa</taxon>
        <taxon>Ecdysozoa</taxon>
        <taxon>Arthropoda</taxon>
        <taxon>Chelicerata</taxon>
        <taxon>Arachnida</taxon>
        <taxon>Araneae</taxon>
        <taxon>Mygalomorphae</taxon>
        <taxon>Theraphosidae</taxon>
        <taxon>Chilobrachys</taxon>
    </lineage>
</organism>
<name>JZT70_CHIGU</name>
<feature type="signal peptide" evidence="1">
    <location>
        <begin position="1"/>
        <end position="17"/>
    </location>
</feature>
<feature type="chain" id="PRO_0000398553" description="U33-theraphotoxin-Cg1c" evidence="6">
    <location>
        <begin position="18"/>
        <end position="124"/>
    </location>
</feature>
<feature type="region of interest" description="Disordered" evidence="2">
    <location>
        <begin position="93"/>
        <end position="124"/>
    </location>
</feature>
<feature type="compositionally biased region" description="Basic and acidic residues" evidence="2">
    <location>
        <begin position="93"/>
        <end position="108"/>
    </location>
</feature>
<feature type="compositionally biased region" description="Acidic residues" evidence="2">
    <location>
        <begin position="109"/>
        <end position="118"/>
    </location>
</feature>
<feature type="disulfide bond" evidence="3 8">
    <location>
        <begin position="26"/>
        <end position="37"/>
    </location>
</feature>
<feature type="disulfide bond" evidence="3 8">
    <location>
        <begin position="31"/>
        <end position="51"/>
    </location>
</feature>
<feature type="disulfide bond" evidence="3 8">
    <location>
        <begin position="36"/>
        <end position="75"/>
    </location>
</feature>
<feature type="disulfide bond" evidence="3 8">
    <location>
        <begin position="61"/>
        <end position="83"/>
    </location>
</feature>
<feature type="disulfide bond" evidence="3 8">
    <location>
        <begin position="77"/>
        <end position="94"/>
    </location>
</feature>
<feature type="strand" evidence="9">
    <location>
        <begin position="24"/>
        <end position="26"/>
    </location>
</feature>
<feature type="strand" evidence="9">
    <location>
        <begin position="29"/>
        <end position="31"/>
    </location>
</feature>
<feature type="strand" evidence="9">
    <location>
        <begin position="33"/>
        <end position="38"/>
    </location>
</feature>
<feature type="strand" evidence="9">
    <location>
        <begin position="43"/>
        <end position="46"/>
    </location>
</feature>
<feature type="strand" evidence="9">
    <location>
        <begin position="50"/>
        <end position="53"/>
    </location>
</feature>
<feature type="strand" evidence="9">
    <location>
        <begin position="67"/>
        <end position="69"/>
    </location>
</feature>
<feature type="strand" evidence="9">
    <location>
        <begin position="71"/>
        <end position="74"/>
    </location>
</feature>
<feature type="strand" evidence="9">
    <location>
        <begin position="79"/>
        <end position="85"/>
    </location>
</feature>
<feature type="strand" evidence="9">
    <location>
        <begin position="87"/>
        <end position="90"/>
    </location>
</feature>
<feature type="strand" evidence="9">
    <location>
        <begin position="92"/>
        <end position="96"/>
    </location>
</feature>